<protein>
    <recommendedName>
        <fullName evidence="1">ATP synthase epsilon chain</fullName>
    </recommendedName>
    <alternativeName>
        <fullName evidence="1">ATP synthase F1 sector epsilon subunit</fullName>
    </alternativeName>
    <alternativeName>
        <fullName evidence="1">F-ATPase epsilon subunit</fullName>
    </alternativeName>
</protein>
<evidence type="ECO:0000255" key="1">
    <source>
        <dbReference type="HAMAP-Rule" id="MF_00530"/>
    </source>
</evidence>
<reference key="1">
    <citation type="submission" date="2007-10" db="EMBL/GenBank/DDBJ databases">
        <title>Genome sequence of Campylobacter concisus 13826 isolated from human feces.</title>
        <authorList>
            <person name="Fouts D.E."/>
            <person name="Mongodin E.F."/>
            <person name="Puiu D."/>
            <person name="Sebastian Y."/>
            <person name="Miller W.G."/>
            <person name="Mandrell R.E."/>
            <person name="On S."/>
            <person name="Nelson K.E."/>
        </authorList>
    </citation>
    <scope>NUCLEOTIDE SEQUENCE [LARGE SCALE GENOMIC DNA]</scope>
    <source>
        <strain>13826</strain>
    </source>
</reference>
<organism>
    <name type="scientific">Campylobacter concisus (strain 13826)</name>
    <dbReference type="NCBI Taxonomy" id="360104"/>
    <lineage>
        <taxon>Bacteria</taxon>
        <taxon>Pseudomonadati</taxon>
        <taxon>Campylobacterota</taxon>
        <taxon>Epsilonproteobacteria</taxon>
        <taxon>Campylobacterales</taxon>
        <taxon>Campylobacteraceae</taxon>
        <taxon>Campylobacter</taxon>
    </lineage>
</organism>
<proteinExistence type="inferred from homology"/>
<feature type="chain" id="PRO_1000056466" description="ATP synthase epsilon chain">
    <location>
        <begin position="1"/>
        <end position="129"/>
    </location>
</feature>
<dbReference type="EMBL" id="CP000792">
    <property type="protein sequence ID" value="EAT97450.1"/>
    <property type="molecule type" value="Genomic_DNA"/>
</dbReference>
<dbReference type="RefSeq" id="WP_002939398.1">
    <property type="nucleotide sequence ID" value="NC_009802.2"/>
</dbReference>
<dbReference type="SMR" id="A7ZC38"/>
<dbReference type="STRING" id="360104.CCC13826_0918"/>
<dbReference type="KEGG" id="cco:CCC13826_0918"/>
<dbReference type="eggNOG" id="COG0355">
    <property type="taxonomic scope" value="Bacteria"/>
</dbReference>
<dbReference type="HOGENOM" id="CLU_084338_2_1_7"/>
<dbReference type="OrthoDB" id="9799969at2"/>
<dbReference type="Proteomes" id="UP000001121">
    <property type="component" value="Chromosome"/>
</dbReference>
<dbReference type="GO" id="GO:0005886">
    <property type="term" value="C:plasma membrane"/>
    <property type="evidence" value="ECO:0007669"/>
    <property type="project" value="UniProtKB-SubCell"/>
</dbReference>
<dbReference type="GO" id="GO:0045259">
    <property type="term" value="C:proton-transporting ATP synthase complex"/>
    <property type="evidence" value="ECO:0007669"/>
    <property type="project" value="UniProtKB-KW"/>
</dbReference>
<dbReference type="GO" id="GO:0005524">
    <property type="term" value="F:ATP binding"/>
    <property type="evidence" value="ECO:0007669"/>
    <property type="project" value="UniProtKB-UniRule"/>
</dbReference>
<dbReference type="GO" id="GO:0046933">
    <property type="term" value="F:proton-transporting ATP synthase activity, rotational mechanism"/>
    <property type="evidence" value="ECO:0007669"/>
    <property type="project" value="UniProtKB-UniRule"/>
</dbReference>
<dbReference type="CDD" id="cd12152">
    <property type="entry name" value="F1-ATPase_delta"/>
    <property type="match status" value="1"/>
</dbReference>
<dbReference type="Gene3D" id="2.60.15.10">
    <property type="entry name" value="F0F1 ATP synthase delta/epsilon subunit, N-terminal"/>
    <property type="match status" value="1"/>
</dbReference>
<dbReference type="HAMAP" id="MF_00530">
    <property type="entry name" value="ATP_synth_epsil_bac"/>
    <property type="match status" value="1"/>
</dbReference>
<dbReference type="InterPro" id="IPR001469">
    <property type="entry name" value="ATP_synth_F1_dsu/esu"/>
</dbReference>
<dbReference type="InterPro" id="IPR020546">
    <property type="entry name" value="ATP_synth_F1_dsu/esu_N"/>
</dbReference>
<dbReference type="InterPro" id="IPR036771">
    <property type="entry name" value="ATPsynth_dsu/esu_N"/>
</dbReference>
<dbReference type="NCBIfam" id="TIGR01216">
    <property type="entry name" value="ATP_synt_epsi"/>
    <property type="match status" value="1"/>
</dbReference>
<dbReference type="PANTHER" id="PTHR13822">
    <property type="entry name" value="ATP SYNTHASE DELTA/EPSILON CHAIN"/>
    <property type="match status" value="1"/>
</dbReference>
<dbReference type="PANTHER" id="PTHR13822:SF10">
    <property type="entry name" value="ATP SYNTHASE EPSILON CHAIN, CHLOROPLASTIC"/>
    <property type="match status" value="1"/>
</dbReference>
<dbReference type="Pfam" id="PF02823">
    <property type="entry name" value="ATP-synt_DE_N"/>
    <property type="match status" value="1"/>
</dbReference>
<dbReference type="SUPFAM" id="SSF51344">
    <property type="entry name" value="Epsilon subunit of F1F0-ATP synthase N-terminal domain"/>
    <property type="match status" value="1"/>
</dbReference>
<name>ATPE_CAMC1</name>
<gene>
    <name evidence="1" type="primary">atpC</name>
    <name type="ordered locus">Ccon26_04450</name>
    <name type="ORF">CCC13826_0918</name>
</gene>
<accession>A7ZC38</accession>
<sequence>MDKLHLEIVTPQGQIFNDDVSSVVLPGSEGEFGVLPNHASLISLLKAGIIDIEDKHKKHDVVAINWGYAKIDEGKVVILADGAVYVSGNSESELANSLEAARNLIESMSSDTNAFAATISKMENVVRAR</sequence>
<keyword id="KW-0066">ATP synthesis</keyword>
<keyword id="KW-0997">Cell inner membrane</keyword>
<keyword id="KW-1003">Cell membrane</keyword>
<keyword id="KW-0139">CF(1)</keyword>
<keyword id="KW-0375">Hydrogen ion transport</keyword>
<keyword id="KW-0406">Ion transport</keyword>
<keyword id="KW-0472">Membrane</keyword>
<keyword id="KW-0813">Transport</keyword>
<comment type="function">
    <text evidence="1">Produces ATP from ADP in the presence of a proton gradient across the membrane.</text>
</comment>
<comment type="subunit">
    <text evidence="1">F-type ATPases have 2 components, CF(1) - the catalytic core - and CF(0) - the membrane proton channel. CF(1) has five subunits: alpha(3), beta(3), gamma(1), delta(1), epsilon(1). CF(0) has three main subunits: a, b and c.</text>
</comment>
<comment type="subcellular location">
    <subcellularLocation>
        <location evidence="1">Cell inner membrane</location>
        <topology evidence="1">Peripheral membrane protein</topology>
    </subcellularLocation>
</comment>
<comment type="similarity">
    <text evidence="1">Belongs to the ATPase epsilon chain family.</text>
</comment>